<dbReference type="EMBL" id="M16486">
    <property type="protein sequence ID" value="AAA26381.1"/>
    <property type="molecule type" value="Genomic_DNA"/>
</dbReference>
<dbReference type="EMBL" id="M28479">
    <property type="protein sequence ID" value="AAA26379.1"/>
    <property type="molecule type" value="Genomic_DNA"/>
</dbReference>
<dbReference type="EMBL" id="J03371">
    <property type="status" value="NOT_ANNOTATED_CDS"/>
    <property type="molecule type" value="Genomic_DNA"/>
</dbReference>
<dbReference type="PIR" id="A25972">
    <property type="entry name" value="A25972"/>
</dbReference>
<dbReference type="PIR" id="A31836">
    <property type="entry name" value="A31836"/>
</dbReference>
<dbReference type="PIR" id="B33971">
    <property type="entry name" value="B33971"/>
</dbReference>
<dbReference type="RefSeq" id="WP_004997204.1">
    <property type="nucleotide sequence ID" value="NZ_CP151153.1"/>
</dbReference>
<dbReference type="OMA" id="NCRQYTH"/>
<dbReference type="GO" id="GO:0009279">
    <property type="term" value="C:cell outer membrane"/>
    <property type="evidence" value="ECO:0007669"/>
    <property type="project" value="UniProtKB-SubCell"/>
</dbReference>
<dbReference type="InterPro" id="IPR032635">
    <property type="entry name" value="Anti_2"/>
</dbReference>
<dbReference type="InterPro" id="IPR008816">
    <property type="entry name" value="Gly_zipper_2TM_dom"/>
</dbReference>
<dbReference type="InterPro" id="IPR016364">
    <property type="entry name" value="Surface_antigen_Rickettsia"/>
</dbReference>
<dbReference type="Pfam" id="PF16998">
    <property type="entry name" value="17kDa_Anti_2"/>
    <property type="match status" value="1"/>
</dbReference>
<dbReference type="Pfam" id="PF05433">
    <property type="entry name" value="Rick_17kDa_Anti"/>
    <property type="match status" value="1"/>
</dbReference>
<dbReference type="PIRSF" id="PIRSF002721">
    <property type="entry name" value="Surface_antigen_Rickettsia"/>
    <property type="match status" value="1"/>
</dbReference>
<dbReference type="PROSITE" id="PS51257">
    <property type="entry name" value="PROKAR_LIPOPROTEIN"/>
    <property type="match status" value="1"/>
</dbReference>
<comment type="subcellular location">
    <subcellularLocation>
        <location evidence="2">Cell outer membrane</location>
        <topology evidence="2">Lipid-anchor</topology>
    </subcellularLocation>
</comment>
<comment type="similarity">
    <text evidence="2">Belongs to the rickettsiale 17 kDa surface antigen family.</text>
</comment>
<sequence length="159" mass="16581">MKLLSKIMIIALATSMLQACNGPGGMNKQGTGTLLGGAGGALLGSQFGKGKGQLVGVGVGALLGAVLGGQIGAGMDEQDRRLAELTSQRALETAPSGSNVEWRNPDNGNYGYVTPNKTYRNSTGQYCREYTQTVVIGGKQQKAYGNACRQPDGQWQVVN</sequence>
<evidence type="ECO:0000255" key="1">
    <source>
        <dbReference type="PROSITE-ProRule" id="PRU00303"/>
    </source>
</evidence>
<evidence type="ECO:0000305" key="2"/>
<feature type="signal peptide" evidence="1">
    <location>
        <begin position="1"/>
        <end position="19"/>
    </location>
</feature>
<feature type="chain" id="PRO_0000018022" description="17 kDa surface antigen">
    <location>
        <begin position="20"/>
        <end position="159"/>
    </location>
</feature>
<feature type="lipid moiety-binding region" description="N-palmitoyl cysteine" evidence="2">
    <location>
        <position position="20"/>
    </location>
</feature>
<feature type="lipid moiety-binding region" description="S-diacylglycerol cysteine" evidence="2">
    <location>
        <position position="20"/>
    </location>
</feature>
<feature type="sequence conflict" description="In Ref. 2; AAA26381." evidence="2" ref="2">
    <original>N</original>
    <variation>D</variation>
    <location>
        <position position="146"/>
    </location>
</feature>
<feature type="sequence conflict" description="In Ref. 2; AAA26381." evidence="2" ref="2">
    <original>G</original>
    <variation>E</variation>
    <location>
        <position position="153"/>
    </location>
</feature>
<name>17KD_RICRI</name>
<reference key="1">
    <citation type="journal article" date="1987" name="J. Bacteriol.">
        <title>Sequence analysis of the 17-kilodalton-antigen gene from Rickettsia rickettsii.</title>
        <authorList>
            <person name="Anderson B.E."/>
            <person name="Regnery R.L."/>
            <person name="Carlone G.M."/>
            <person name="Tzianabos T."/>
            <person name="McDade J.E."/>
            <person name="Fu Z.Y."/>
            <person name="Bellini W.J."/>
        </authorList>
    </citation>
    <scope>NUCLEOTIDE SEQUENCE [GENOMIC DNA]</scope>
</reference>
<reference key="2">
    <citation type="journal article" date="1989" name="J. Bacteriol.">
        <title>Comparative sequence analysis of a genus-common rickettsial antigen gene.</title>
        <authorList>
            <person name="Anderson B.E."/>
            <person name="Tzianabos T."/>
        </authorList>
    </citation>
    <scope>NUCLEOTIDE SEQUENCE [GENOMIC DNA]</scope>
</reference>
<reference key="3">
    <citation type="journal article" date="1988" name="J. Bacteriol.">
        <title>Expression of the gene encoding the 17-kilodalton antigen from Rickettsia rickettsii: transcription and posttranslational modification.</title>
        <authorList>
            <person name="Anderson B.E."/>
            <person name="Baumstark B.R."/>
            <person name="Bellini W.J."/>
        </authorList>
    </citation>
    <scope>NUCLEOTIDE SEQUENCE [GENOMIC DNA] OF 1-30</scope>
</reference>
<gene>
    <name type="primary">omp</name>
</gene>
<accession>P0A3N5</accession>
<accession>P05372</accession>
<protein>
    <recommendedName>
        <fullName>17 kDa surface antigen</fullName>
    </recommendedName>
</protein>
<keyword id="KW-0998">Cell outer membrane</keyword>
<keyword id="KW-0449">Lipoprotein</keyword>
<keyword id="KW-0472">Membrane</keyword>
<keyword id="KW-0564">Palmitate</keyword>
<keyword id="KW-0732">Signal</keyword>
<proteinExistence type="inferred from homology"/>
<organism>
    <name type="scientific">Rickettsia rickettsii</name>
    <dbReference type="NCBI Taxonomy" id="783"/>
    <lineage>
        <taxon>Bacteria</taxon>
        <taxon>Pseudomonadati</taxon>
        <taxon>Pseudomonadota</taxon>
        <taxon>Alphaproteobacteria</taxon>
        <taxon>Rickettsiales</taxon>
        <taxon>Rickettsiaceae</taxon>
        <taxon>Rickettsieae</taxon>
        <taxon>Rickettsia</taxon>
        <taxon>spotted fever group</taxon>
    </lineage>
</organism>